<organism>
    <name type="scientific">Pyrobaculum aerophilum (strain ATCC 51768 / DSM 7523 / JCM 9630 / CIP 104966 / NBRC 100827 / IM2)</name>
    <dbReference type="NCBI Taxonomy" id="178306"/>
    <lineage>
        <taxon>Archaea</taxon>
        <taxon>Thermoproteota</taxon>
        <taxon>Thermoprotei</taxon>
        <taxon>Thermoproteales</taxon>
        <taxon>Thermoproteaceae</taxon>
        <taxon>Pyrobaculum</taxon>
    </lineage>
</organism>
<keyword id="KW-0067">ATP-binding</keyword>
<keyword id="KW-0963">Cytoplasm</keyword>
<keyword id="KW-0324">Glycolysis</keyword>
<keyword id="KW-0418">Kinase</keyword>
<keyword id="KW-0547">Nucleotide-binding</keyword>
<keyword id="KW-1185">Reference proteome</keyword>
<keyword id="KW-0808">Transferase</keyword>
<sequence length="408" mass="44692">MLLNEIIDLIPNINKCLKKGKTLIIRIDINSPIVNGKIIDDFRIRAHSYTLRLASDAGARAVVLAHQGRPGQDDFTSLEIHKPYIEKYLERPIKFVDDIIGPEARRQIKELKDGEILLLENVRILSEEVIEKVPEAQAETLLVRKLAPLADYYVFDGFAVAHRSQPSVVGFPIVLPSCAGPVFERELRALGAVFEKRGRGVTLIAGGAKMPDTLKAVEQLLKNGFVEKVAVGGLVGFVFALGKYGVLNSALKQEVEKGGFLPYIERARQLLAKYGAQIYTPVDFAVNQNGRLDVDIYSLAQPPLDIGRSTTIAFKEVIEQSEIVIFSGPMGYIEDERFATGTIELLKAASNRRLILGGGHTIMAAEKAGVLDKAYHVSTGGRAFIQTIGGEEMPAVKALLTSAKKFSL</sequence>
<reference key="1">
    <citation type="journal article" date="2002" name="Proc. Natl. Acad. Sci. U.S.A.">
        <title>Genome sequence of the hyperthermophilic crenarchaeon Pyrobaculum aerophilum.</title>
        <authorList>
            <person name="Fitz-Gibbon S.T."/>
            <person name="Ladner H."/>
            <person name="Kim U.-J."/>
            <person name="Stetter K.O."/>
            <person name="Simon M.I."/>
            <person name="Miller J.H."/>
        </authorList>
    </citation>
    <scope>NUCLEOTIDE SEQUENCE [LARGE SCALE GENOMIC DNA]</scope>
    <source>
        <strain>ATCC 51768 / DSM 7523 / JCM 9630 / CIP 104966 / NBRC 100827 / IM2</strain>
    </source>
</reference>
<feature type="chain" id="PRO_0000146065" description="Phosphoglycerate kinase">
    <location>
        <begin position="1"/>
        <end position="408"/>
    </location>
</feature>
<feature type="binding site" evidence="1">
    <location>
        <begin position="28"/>
        <end position="30"/>
    </location>
    <ligand>
        <name>substrate</name>
    </ligand>
</feature>
<feature type="binding site" evidence="1">
    <location>
        <position position="43"/>
    </location>
    <ligand>
        <name>substrate</name>
    </ligand>
</feature>
<feature type="binding site" evidence="1">
    <location>
        <begin position="66"/>
        <end position="69"/>
    </location>
    <ligand>
        <name>substrate</name>
    </ligand>
</feature>
<feature type="binding site" evidence="1">
    <location>
        <position position="123"/>
    </location>
    <ligand>
        <name>substrate</name>
    </ligand>
</feature>
<feature type="binding site" evidence="1">
    <location>
        <position position="163"/>
    </location>
    <ligand>
        <name>substrate</name>
    </ligand>
</feature>
<feature type="binding site" evidence="1">
    <location>
        <position position="334"/>
    </location>
    <ligand>
        <name>ATP</name>
        <dbReference type="ChEBI" id="CHEBI:30616"/>
    </ligand>
</feature>
<feature type="binding site" evidence="1">
    <location>
        <begin position="358"/>
        <end position="361"/>
    </location>
    <ligand>
        <name>ATP</name>
        <dbReference type="ChEBI" id="CHEBI:30616"/>
    </ligand>
</feature>
<protein>
    <recommendedName>
        <fullName evidence="1">Phosphoglycerate kinase</fullName>
        <ecNumber evidence="1">2.7.2.3</ecNumber>
    </recommendedName>
</protein>
<dbReference type="EC" id="2.7.2.3" evidence="1"/>
<dbReference type="EMBL" id="AE009441">
    <property type="protein sequence ID" value="AAL63696.1"/>
    <property type="molecule type" value="Genomic_DNA"/>
</dbReference>
<dbReference type="RefSeq" id="WP_011008167.1">
    <property type="nucleotide sequence ID" value="NC_003364.1"/>
</dbReference>
<dbReference type="SMR" id="Q8ZWK6"/>
<dbReference type="FunCoup" id="Q8ZWK6">
    <property type="interactions" value="193"/>
</dbReference>
<dbReference type="STRING" id="178306.PAE1742"/>
<dbReference type="EnsemblBacteria" id="AAL63696">
    <property type="protein sequence ID" value="AAL63696"/>
    <property type="gene ID" value="PAE1742"/>
</dbReference>
<dbReference type="GeneID" id="1465946"/>
<dbReference type="KEGG" id="pai:PAE1742"/>
<dbReference type="PATRIC" id="fig|178306.9.peg.1287"/>
<dbReference type="eggNOG" id="arCOG00496">
    <property type="taxonomic scope" value="Archaea"/>
</dbReference>
<dbReference type="HOGENOM" id="CLU_025427_0_2_2"/>
<dbReference type="InParanoid" id="Q8ZWK6"/>
<dbReference type="UniPathway" id="UPA00109">
    <property type="reaction ID" value="UER00185"/>
</dbReference>
<dbReference type="Proteomes" id="UP000002439">
    <property type="component" value="Chromosome"/>
</dbReference>
<dbReference type="GO" id="GO:0005829">
    <property type="term" value="C:cytosol"/>
    <property type="evidence" value="ECO:0000318"/>
    <property type="project" value="GO_Central"/>
</dbReference>
<dbReference type="GO" id="GO:0043531">
    <property type="term" value="F:ADP binding"/>
    <property type="evidence" value="ECO:0000318"/>
    <property type="project" value="GO_Central"/>
</dbReference>
<dbReference type="GO" id="GO:0005524">
    <property type="term" value="F:ATP binding"/>
    <property type="evidence" value="ECO:0000318"/>
    <property type="project" value="GO_Central"/>
</dbReference>
<dbReference type="GO" id="GO:0004618">
    <property type="term" value="F:phosphoglycerate kinase activity"/>
    <property type="evidence" value="ECO:0000318"/>
    <property type="project" value="GO_Central"/>
</dbReference>
<dbReference type="GO" id="GO:0006094">
    <property type="term" value="P:gluconeogenesis"/>
    <property type="evidence" value="ECO:0000318"/>
    <property type="project" value="GO_Central"/>
</dbReference>
<dbReference type="GO" id="GO:0006096">
    <property type="term" value="P:glycolytic process"/>
    <property type="evidence" value="ECO:0000318"/>
    <property type="project" value="GO_Central"/>
</dbReference>
<dbReference type="FunFam" id="3.40.50.1260:FF:000006">
    <property type="entry name" value="Phosphoglycerate kinase"/>
    <property type="match status" value="1"/>
</dbReference>
<dbReference type="FunFam" id="3.40.50.1260:FF:000012">
    <property type="entry name" value="Phosphoglycerate kinase"/>
    <property type="match status" value="1"/>
</dbReference>
<dbReference type="Gene3D" id="3.40.50.1260">
    <property type="entry name" value="Phosphoglycerate kinase, N-terminal domain"/>
    <property type="match status" value="2"/>
</dbReference>
<dbReference type="HAMAP" id="MF_00145">
    <property type="entry name" value="Phosphoglyc_kinase"/>
    <property type="match status" value="1"/>
</dbReference>
<dbReference type="InterPro" id="IPR001576">
    <property type="entry name" value="Phosphoglycerate_kinase"/>
</dbReference>
<dbReference type="InterPro" id="IPR015824">
    <property type="entry name" value="Phosphoglycerate_kinase_N"/>
</dbReference>
<dbReference type="InterPro" id="IPR036043">
    <property type="entry name" value="Phosphoglycerate_kinase_sf"/>
</dbReference>
<dbReference type="PANTHER" id="PTHR11406">
    <property type="entry name" value="PHOSPHOGLYCERATE KINASE"/>
    <property type="match status" value="1"/>
</dbReference>
<dbReference type="PANTHER" id="PTHR11406:SF23">
    <property type="entry name" value="PHOSPHOGLYCERATE KINASE 1, CHLOROPLASTIC-RELATED"/>
    <property type="match status" value="1"/>
</dbReference>
<dbReference type="Pfam" id="PF00162">
    <property type="entry name" value="PGK"/>
    <property type="match status" value="1"/>
</dbReference>
<dbReference type="PIRSF" id="PIRSF000724">
    <property type="entry name" value="Pgk"/>
    <property type="match status" value="1"/>
</dbReference>
<dbReference type="PRINTS" id="PR00477">
    <property type="entry name" value="PHGLYCKINASE"/>
</dbReference>
<dbReference type="SUPFAM" id="SSF53748">
    <property type="entry name" value="Phosphoglycerate kinase"/>
    <property type="match status" value="1"/>
</dbReference>
<evidence type="ECO:0000255" key="1">
    <source>
        <dbReference type="HAMAP-Rule" id="MF_00145"/>
    </source>
</evidence>
<gene>
    <name evidence="1" type="primary">pgk</name>
    <name type="ordered locus">PAE1742</name>
</gene>
<proteinExistence type="inferred from homology"/>
<name>PGK_PYRAE</name>
<comment type="catalytic activity">
    <reaction evidence="1">
        <text>(2R)-3-phosphoglycerate + ATP = (2R)-3-phospho-glyceroyl phosphate + ADP</text>
        <dbReference type="Rhea" id="RHEA:14801"/>
        <dbReference type="ChEBI" id="CHEBI:30616"/>
        <dbReference type="ChEBI" id="CHEBI:57604"/>
        <dbReference type="ChEBI" id="CHEBI:58272"/>
        <dbReference type="ChEBI" id="CHEBI:456216"/>
        <dbReference type="EC" id="2.7.2.3"/>
    </reaction>
</comment>
<comment type="pathway">
    <text evidence="1">Carbohydrate degradation; glycolysis; pyruvate from D-glyceraldehyde 3-phosphate: step 2/5.</text>
</comment>
<comment type="subunit">
    <text evidence="1">Monomer.</text>
</comment>
<comment type="subcellular location">
    <subcellularLocation>
        <location evidence="1">Cytoplasm</location>
    </subcellularLocation>
</comment>
<comment type="similarity">
    <text evidence="1">Belongs to the phosphoglycerate kinase family.</text>
</comment>
<accession>Q8ZWK6</accession>